<proteinExistence type="inferred from homology"/>
<feature type="chain" id="PRO_0000352121" description="Small ribosomal subunit protein uS2c">
    <location>
        <begin position="1"/>
        <end position="236"/>
    </location>
</feature>
<comment type="subcellular location">
    <subcellularLocation>
        <location>Plastid</location>
        <location>Chloroplast</location>
    </subcellularLocation>
</comment>
<comment type="similarity">
    <text evidence="1">Belongs to the universal ribosomal protein uS2 family.</text>
</comment>
<evidence type="ECO:0000305" key="1"/>
<dbReference type="EMBL" id="EF380354">
    <property type="protein sequence ID" value="ABQ52508.1"/>
    <property type="molecule type" value="Genomic_DNA"/>
</dbReference>
<dbReference type="RefSeq" id="YP_001294259.1">
    <property type="nucleotide sequence ID" value="NC_009600.1"/>
</dbReference>
<dbReference type="SMR" id="A6MMT3"/>
<dbReference type="GeneID" id="5236793"/>
<dbReference type="GO" id="GO:0009507">
    <property type="term" value="C:chloroplast"/>
    <property type="evidence" value="ECO:0007669"/>
    <property type="project" value="UniProtKB-SubCell"/>
</dbReference>
<dbReference type="GO" id="GO:0005763">
    <property type="term" value="C:mitochondrial small ribosomal subunit"/>
    <property type="evidence" value="ECO:0007669"/>
    <property type="project" value="TreeGrafter"/>
</dbReference>
<dbReference type="GO" id="GO:0003735">
    <property type="term" value="F:structural constituent of ribosome"/>
    <property type="evidence" value="ECO:0007669"/>
    <property type="project" value="InterPro"/>
</dbReference>
<dbReference type="GO" id="GO:0006412">
    <property type="term" value="P:translation"/>
    <property type="evidence" value="ECO:0007669"/>
    <property type="project" value="UniProtKB-UniRule"/>
</dbReference>
<dbReference type="CDD" id="cd01425">
    <property type="entry name" value="RPS2"/>
    <property type="match status" value="1"/>
</dbReference>
<dbReference type="FunFam" id="3.40.50.10490:FF:000101">
    <property type="match status" value="1"/>
</dbReference>
<dbReference type="FunFam" id="1.10.287.610:FF:000001">
    <property type="entry name" value="30S ribosomal protein S2"/>
    <property type="match status" value="1"/>
</dbReference>
<dbReference type="Gene3D" id="3.40.50.10490">
    <property type="entry name" value="Glucose-6-phosphate isomerase like protein, domain 1"/>
    <property type="match status" value="1"/>
</dbReference>
<dbReference type="Gene3D" id="1.10.287.610">
    <property type="entry name" value="Helix hairpin bin"/>
    <property type="match status" value="1"/>
</dbReference>
<dbReference type="HAMAP" id="MF_00291_B">
    <property type="entry name" value="Ribosomal_uS2_B"/>
    <property type="match status" value="1"/>
</dbReference>
<dbReference type="InterPro" id="IPR001865">
    <property type="entry name" value="Ribosomal_uS2"/>
</dbReference>
<dbReference type="InterPro" id="IPR005706">
    <property type="entry name" value="Ribosomal_uS2_bac/mit/plastid"/>
</dbReference>
<dbReference type="InterPro" id="IPR018130">
    <property type="entry name" value="Ribosomal_uS2_CS"/>
</dbReference>
<dbReference type="InterPro" id="IPR023591">
    <property type="entry name" value="Ribosomal_uS2_flav_dom_sf"/>
</dbReference>
<dbReference type="NCBIfam" id="TIGR01011">
    <property type="entry name" value="rpsB_bact"/>
    <property type="match status" value="1"/>
</dbReference>
<dbReference type="PANTHER" id="PTHR12534">
    <property type="entry name" value="30S RIBOSOMAL PROTEIN S2 PROKARYOTIC AND ORGANELLAR"/>
    <property type="match status" value="1"/>
</dbReference>
<dbReference type="PANTHER" id="PTHR12534:SF0">
    <property type="entry name" value="SMALL RIBOSOMAL SUBUNIT PROTEIN US2M"/>
    <property type="match status" value="1"/>
</dbReference>
<dbReference type="Pfam" id="PF00318">
    <property type="entry name" value="Ribosomal_S2"/>
    <property type="match status" value="1"/>
</dbReference>
<dbReference type="PRINTS" id="PR00395">
    <property type="entry name" value="RIBOSOMALS2"/>
</dbReference>
<dbReference type="SUPFAM" id="SSF52313">
    <property type="entry name" value="Ribosomal protein S2"/>
    <property type="match status" value="1"/>
</dbReference>
<dbReference type="PROSITE" id="PS00962">
    <property type="entry name" value="RIBOSOMAL_S2_1"/>
    <property type="match status" value="1"/>
</dbReference>
<dbReference type="PROSITE" id="PS00963">
    <property type="entry name" value="RIBOSOMAL_S2_2"/>
    <property type="match status" value="1"/>
</dbReference>
<sequence>MTRRYWNINLEEMLEAGVHFGHGTRKWNPRMAPYISAKRKGIHITNLTRTARSLSEACDLVFDAASRGKHFLIVGTKDKAADSVASAAIRARCHYVNKKWLGGMLTNWFTTETRLHKFRDLRAEQKTGRLNRLPKRDAAMLKRKLSHLQAYLGGIKYMTGLPDIVIIIDQQEEYTAIRECATLGIPTICLIDTNCDPDLADIPIPANDDAIASIRLILNKLVSAICEGRSSYIRNH</sequence>
<keyword id="KW-0150">Chloroplast</keyword>
<keyword id="KW-0934">Plastid</keyword>
<keyword id="KW-0687">Ribonucleoprotein</keyword>
<keyword id="KW-0689">Ribosomal protein</keyword>
<geneLocation type="chloroplast"/>
<accession>A6MMT3</accession>
<organism>
    <name type="scientific">Illicium oligandrum</name>
    <name type="common">Star anise</name>
    <dbReference type="NCBI Taxonomy" id="145286"/>
    <lineage>
        <taxon>Eukaryota</taxon>
        <taxon>Viridiplantae</taxon>
        <taxon>Streptophyta</taxon>
        <taxon>Embryophyta</taxon>
        <taxon>Tracheophyta</taxon>
        <taxon>Spermatophyta</taxon>
        <taxon>Magnoliopsida</taxon>
        <taxon>Austrobaileyales</taxon>
        <taxon>Schisandraceae</taxon>
        <taxon>Illicium</taxon>
    </lineage>
</organism>
<protein>
    <recommendedName>
        <fullName evidence="1">Small ribosomal subunit protein uS2c</fullName>
    </recommendedName>
    <alternativeName>
        <fullName>30S ribosomal protein S2, chloroplastic</fullName>
    </alternativeName>
</protein>
<name>RR2_ILLOL</name>
<reference key="1">
    <citation type="journal article" date="2007" name="Mol. Phylogenet. Evol.">
        <title>Phylogenetic and evolutionary implications of complete chloroplast genome sequences of four early-diverging angiosperms: Buxus (Buxaceae), Chloranthus (Chloranthaceae), Dioscorea (Dioscoreaceae), and Illicium (Schisandraceae).</title>
        <authorList>
            <person name="Hansen D.R."/>
            <person name="Dastidar S.G."/>
            <person name="Cai Z."/>
            <person name="Penaflor C."/>
            <person name="Kuehl J.V."/>
            <person name="Boore J.L."/>
            <person name="Jansen R.K."/>
        </authorList>
    </citation>
    <scope>NUCLEOTIDE SEQUENCE [LARGE SCALE GENOMIC DNA]</scope>
</reference>
<gene>
    <name type="primary">rps2</name>
</gene>